<reference key="1">
    <citation type="journal article" date="2004" name="Nature">
        <title>Genome sequence of Silicibacter pomeroyi reveals adaptations to the marine environment.</title>
        <authorList>
            <person name="Moran M.A."/>
            <person name="Buchan A."/>
            <person name="Gonzalez J.M."/>
            <person name="Heidelberg J.F."/>
            <person name="Whitman W.B."/>
            <person name="Kiene R.P."/>
            <person name="Henriksen J.R."/>
            <person name="King G.M."/>
            <person name="Belas R."/>
            <person name="Fuqua C."/>
            <person name="Brinkac L.M."/>
            <person name="Lewis M."/>
            <person name="Johri S."/>
            <person name="Weaver B."/>
            <person name="Pai G."/>
            <person name="Eisen J.A."/>
            <person name="Rahe E."/>
            <person name="Sheldon W.M."/>
            <person name="Ye W."/>
            <person name="Miller T.R."/>
            <person name="Carlton J."/>
            <person name="Rasko D.A."/>
            <person name="Paulsen I.T."/>
            <person name="Ren Q."/>
            <person name="Daugherty S.C."/>
            <person name="DeBoy R.T."/>
            <person name="Dodson R.J."/>
            <person name="Durkin A.S."/>
            <person name="Madupu R."/>
            <person name="Nelson W.C."/>
            <person name="Sullivan S.A."/>
            <person name="Rosovitz M.J."/>
            <person name="Haft D.H."/>
            <person name="Selengut J."/>
            <person name="Ward N."/>
        </authorList>
    </citation>
    <scope>NUCLEOTIDE SEQUENCE [LARGE SCALE GENOMIC DNA]</scope>
    <source>
        <strain>ATCC 700808 / DSM 15171 / DSS-3</strain>
    </source>
</reference>
<reference key="2">
    <citation type="journal article" date="2014" name="Stand. Genomic Sci.">
        <title>An updated genome annotation for the model marine bacterium Ruegeria pomeroyi DSS-3.</title>
        <authorList>
            <person name="Rivers A.R."/>
            <person name="Smith C.B."/>
            <person name="Moran M.A."/>
        </authorList>
    </citation>
    <scope>GENOME REANNOTATION</scope>
    <source>
        <strain>ATCC 700808 / DSM 15171 / DSS-3</strain>
    </source>
</reference>
<name>RL9_RUEPO</name>
<evidence type="ECO:0000255" key="1">
    <source>
        <dbReference type="HAMAP-Rule" id="MF_00503"/>
    </source>
</evidence>
<evidence type="ECO:0000305" key="2"/>
<sequence length="200" mass="21173">MQVILLERVAKLGQMGDVVDVKSGYARNFLLPQSKALVASDANIAQFEAQKAQLEARNLETKQEAEALAVKLDGQQFVVIRSASDAGALYGSVTPRDAAEAATEAGFSVDKKQIALIAPIKDLGLHTVAVRLHPEVEVSINLNIARSPEEAELQASGKSIQELAAEEEAAAEFEIAELFDDLGGAASDDDDQAPASDETA</sequence>
<proteinExistence type="inferred from homology"/>
<dbReference type="EMBL" id="CP000031">
    <property type="protein sequence ID" value="AAV95547.1"/>
    <property type="molecule type" value="Genomic_DNA"/>
</dbReference>
<dbReference type="RefSeq" id="WP_011048001.1">
    <property type="nucleotide sequence ID" value="NC_003911.12"/>
</dbReference>
<dbReference type="SMR" id="Q5LR48"/>
<dbReference type="STRING" id="246200.SPO2283"/>
<dbReference type="PaxDb" id="246200-SPO2283"/>
<dbReference type="KEGG" id="sil:SPO2283"/>
<dbReference type="eggNOG" id="COG0359">
    <property type="taxonomic scope" value="Bacteria"/>
</dbReference>
<dbReference type="HOGENOM" id="CLU_078938_1_0_5"/>
<dbReference type="OrthoDB" id="9788336at2"/>
<dbReference type="Proteomes" id="UP000001023">
    <property type="component" value="Chromosome"/>
</dbReference>
<dbReference type="GO" id="GO:1990904">
    <property type="term" value="C:ribonucleoprotein complex"/>
    <property type="evidence" value="ECO:0007669"/>
    <property type="project" value="UniProtKB-KW"/>
</dbReference>
<dbReference type="GO" id="GO:0005840">
    <property type="term" value="C:ribosome"/>
    <property type="evidence" value="ECO:0007669"/>
    <property type="project" value="UniProtKB-KW"/>
</dbReference>
<dbReference type="GO" id="GO:0019843">
    <property type="term" value="F:rRNA binding"/>
    <property type="evidence" value="ECO:0007669"/>
    <property type="project" value="UniProtKB-UniRule"/>
</dbReference>
<dbReference type="GO" id="GO:0003735">
    <property type="term" value="F:structural constituent of ribosome"/>
    <property type="evidence" value="ECO:0007669"/>
    <property type="project" value="InterPro"/>
</dbReference>
<dbReference type="GO" id="GO:0006412">
    <property type="term" value="P:translation"/>
    <property type="evidence" value="ECO:0007669"/>
    <property type="project" value="UniProtKB-UniRule"/>
</dbReference>
<dbReference type="Gene3D" id="3.10.430.100">
    <property type="entry name" value="Ribosomal protein L9, C-terminal domain"/>
    <property type="match status" value="1"/>
</dbReference>
<dbReference type="Gene3D" id="3.40.5.10">
    <property type="entry name" value="Ribosomal protein L9, N-terminal domain"/>
    <property type="match status" value="1"/>
</dbReference>
<dbReference type="HAMAP" id="MF_00503">
    <property type="entry name" value="Ribosomal_bL9"/>
    <property type="match status" value="1"/>
</dbReference>
<dbReference type="InterPro" id="IPR000244">
    <property type="entry name" value="Ribosomal_bL9"/>
</dbReference>
<dbReference type="InterPro" id="IPR009027">
    <property type="entry name" value="Ribosomal_bL9/RNase_H1_N"/>
</dbReference>
<dbReference type="InterPro" id="IPR020594">
    <property type="entry name" value="Ribosomal_bL9_bac/chp"/>
</dbReference>
<dbReference type="InterPro" id="IPR020069">
    <property type="entry name" value="Ribosomal_bL9_C"/>
</dbReference>
<dbReference type="InterPro" id="IPR036791">
    <property type="entry name" value="Ribosomal_bL9_C_sf"/>
</dbReference>
<dbReference type="InterPro" id="IPR020070">
    <property type="entry name" value="Ribosomal_bL9_N"/>
</dbReference>
<dbReference type="InterPro" id="IPR036935">
    <property type="entry name" value="Ribosomal_bL9_N_sf"/>
</dbReference>
<dbReference type="NCBIfam" id="TIGR00158">
    <property type="entry name" value="L9"/>
    <property type="match status" value="1"/>
</dbReference>
<dbReference type="PANTHER" id="PTHR21368">
    <property type="entry name" value="50S RIBOSOMAL PROTEIN L9"/>
    <property type="match status" value="1"/>
</dbReference>
<dbReference type="Pfam" id="PF03948">
    <property type="entry name" value="Ribosomal_L9_C"/>
    <property type="match status" value="1"/>
</dbReference>
<dbReference type="Pfam" id="PF01281">
    <property type="entry name" value="Ribosomal_L9_N"/>
    <property type="match status" value="1"/>
</dbReference>
<dbReference type="SUPFAM" id="SSF55658">
    <property type="entry name" value="L9 N-domain-like"/>
    <property type="match status" value="1"/>
</dbReference>
<dbReference type="SUPFAM" id="SSF55653">
    <property type="entry name" value="Ribosomal protein L9 C-domain"/>
    <property type="match status" value="1"/>
</dbReference>
<dbReference type="PROSITE" id="PS00651">
    <property type="entry name" value="RIBOSOMAL_L9"/>
    <property type="match status" value="1"/>
</dbReference>
<gene>
    <name evidence="1" type="primary">rplI</name>
    <name type="ordered locus">SPO2283</name>
</gene>
<protein>
    <recommendedName>
        <fullName evidence="1">Large ribosomal subunit protein bL9</fullName>
    </recommendedName>
    <alternativeName>
        <fullName evidence="2">50S ribosomal protein L9</fullName>
    </alternativeName>
</protein>
<feature type="chain" id="PRO_0000236588" description="Large ribosomal subunit protein bL9">
    <location>
        <begin position="1"/>
        <end position="200"/>
    </location>
</feature>
<comment type="function">
    <text evidence="1">Binds to the 23S rRNA.</text>
</comment>
<comment type="similarity">
    <text evidence="1">Belongs to the bacterial ribosomal protein bL9 family.</text>
</comment>
<accession>Q5LR48</accession>
<organism>
    <name type="scientific">Ruegeria pomeroyi (strain ATCC 700808 / DSM 15171 / DSS-3)</name>
    <name type="common">Silicibacter pomeroyi</name>
    <dbReference type="NCBI Taxonomy" id="246200"/>
    <lineage>
        <taxon>Bacteria</taxon>
        <taxon>Pseudomonadati</taxon>
        <taxon>Pseudomonadota</taxon>
        <taxon>Alphaproteobacteria</taxon>
        <taxon>Rhodobacterales</taxon>
        <taxon>Roseobacteraceae</taxon>
        <taxon>Ruegeria</taxon>
    </lineage>
</organism>
<keyword id="KW-1185">Reference proteome</keyword>
<keyword id="KW-0687">Ribonucleoprotein</keyword>
<keyword id="KW-0689">Ribosomal protein</keyword>
<keyword id="KW-0694">RNA-binding</keyword>
<keyword id="KW-0699">rRNA-binding</keyword>